<dbReference type="SMR" id="P0C5F3"/>
<dbReference type="GO" id="GO:0005576">
    <property type="term" value="C:extracellular region"/>
    <property type="evidence" value="ECO:0007669"/>
    <property type="project" value="UniProtKB-SubCell"/>
</dbReference>
<dbReference type="InterPro" id="IPR029277">
    <property type="entry name" value="SVWC_dom"/>
</dbReference>
<dbReference type="Pfam" id="PF15430">
    <property type="entry name" value="SVWC"/>
    <property type="match status" value="1"/>
</dbReference>
<dbReference type="SMART" id="SM01318">
    <property type="entry name" value="SVWC"/>
    <property type="match status" value="1"/>
</dbReference>
<evidence type="ECO:0000269" key="1">
    <source>
    </source>
</evidence>
<evidence type="ECO:0000305" key="2"/>
<comment type="function">
    <text>Not toxic to insect.</text>
</comment>
<comment type="subcellular location">
    <subcellularLocation>
        <location>Secreted</location>
    </subcellularLocation>
</comment>
<comment type="tissue specificity">
    <text>Expressed by the venom gland.</text>
</comment>
<comment type="PTM">
    <text>Contains 4 disulfide bonds.</text>
</comment>
<comment type="mass spectrometry" mass="7781.6" method="MALDI" evidence="1"/>
<comment type="miscellaneous">
    <text>Is the most abundant peptide of the venom.</text>
</comment>
<comment type="similarity">
    <text evidence="2">Belongs to the scorpion La1-like peptide family.</text>
</comment>
<keyword id="KW-0027">Amidation</keyword>
<keyword id="KW-0903">Direct protein sequencing</keyword>
<keyword id="KW-1015">Disulfide bond</keyword>
<keyword id="KW-0964">Secreted</keyword>
<reference key="1">
    <citation type="journal article" date="2007" name="Toxicon">
        <title>Characterization of peptide components in the venom of the scorpion Liocheles australasiae (Hemiscorpiidae).</title>
        <authorList>
            <person name="Miyashita M."/>
            <person name="Otsuki J."/>
            <person name="Hanai Y."/>
            <person name="Nakagawa Y."/>
            <person name="Miyagawa H."/>
        </authorList>
    </citation>
    <scope>PROTEIN SEQUENCE</scope>
    <scope>AMIDATION AT LYS-73</scope>
    <scope>MASS SPECTROMETRY</scope>
    <source>
        <tissue>Venom</tissue>
    </source>
</reference>
<protein>
    <recommendedName>
        <fullName>Venom peptide La1</fullName>
    </recommendedName>
</protein>
<organism>
    <name type="scientific">Liocheles australasiae</name>
    <name type="common">Dwarf wood scorpion</name>
    <dbReference type="NCBI Taxonomy" id="431266"/>
    <lineage>
        <taxon>Eukaryota</taxon>
        <taxon>Metazoa</taxon>
        <taxon>Ecdysozoa</taxon>
        <taxon>Arthropoda</taxon>
        <taxon>Chelicerata</taxon>
        <taxon>Arachnida</taxon>
        <taxon>Scorpiones</taxon>
        <taxon>Iurida</taxon>
        <taxon>Scorpionoidea</taxon>
        <taxon>Hemiscorpiidae</taxon>
        <taxon>Liocheles</taxon>
    </lineage>
</organism>
<accession>P0C5F3</accession>
<sequence length="73" mass="7796">FGESCIAGRFIVPLGQQVTDQRDCALYKCVNYNKKFALETKRCATVNLKSGCKTVPGGAGAAFPSCCPMVTCK</sequence>
<name>LA1_LIOAU</name>
<proteinExistence type="evidence at protein level"/>
<feature type="chain" id="PRO_0000305107" description="Venom peptide La1">
    <location>
        <begin position="1"/>
        <end position="73"/>
    </location>
</feature>
<feature type="modified residue" description="Lysine amide" evidence="1">
    <location>
        <position position="73"/>
    </location>
</feature>